<feature type="chain" id="PRO_1000008613" description="4-hydroxy-tetrahydrodipicolinate reductase">
    <location>
        <begin position="1"/>
        <end position="267"/>
    </location>
</feature>
<feature type="active site" description="Proton donor/acceptor" evidence="1">
    <location>
        <position position="155"/>
    </location>
</feature>
<feature type="active site" description="Proton donor" evidence="1">
    <location>
        <position position="159"/>
    </location>
</feature>
<feature type="binding site" evidence="1">
    <location>
        <begin position="8"/>
        <end position="13"/>
    </location>
    <ligand>
        <name>NAD(+)</name>
        <dbReference type="ChEBI" id="CHEBI:57540"/>
    </ligand>
</feature>
<feature type="binding site" evidence="1">
    <location>
        <position position="34"/>
    </location>
    <ligand>
        <name>NAD(+)</name>
        <dbReference type="ChEBI" id="CHEBI:57540"/>
    </ligand>
</feature>
<feature type="binding site" evidence="1">
    <location>
        <position position="35"/>
    </location>
    <ligand>
        <name>NADP(+)</name>
        <dbReference type="ChEBI" id="CHEBI:58349"/>
    </ligand>
</feature>
<feature type="binding site" evidence="1">
    <location>
        <begin position="98"/>
        <end position="100"/>
    </location>
    <ligand>
        <name>NAD(+)</name>
        <dbReference type="ChEBI" id="CHEBI:57540"/>
    </ligand>
</feature>
<feature type="binding site" evidence="1">
    <location>
        <begin position="122"/>
        <end position="125"/>
    </location>
    <ligand>
        <name>NAD(+)</name>
        <dbReference type="ChEBI" id="CHEBI:57540"/>
    </ligand>
</feature>
<feature type="binding site" evidence="1">
    <location>
        <position position="156"/>
    </location>
    <ligand>
        <name>(S)-2,3,4,5-tetrahydrodipicolinate</name>
        <dbReference type="ChEBI" id="CHEBI:16845"/>
    </ligand>
</feature>
<feature type="binding site" evidence="1">
    <location>
        <begin position="165"/>
        <end position="166"/>
    </location>
    <ligand>
        <name>(S)-2,3,4,5-tetrahydrodipicolinate</name>
        <dbReference type="ChEBI" id="CHEBI:16845"/>
    </ligand>
</feature>
<dbReference type="EC" id="1.17.1.8" evidence="1"/>
<dbReference type="EMBL" id="CP000680">
    <property type="protein sequence ID" value="ABP86370.1"/>
    <property type="molecule type" value="Genomic_DNA"/>
</dbReference>
<dbReference type="SMR" id="A4XYF4"/>
<dbReference type="STRING" id="399739.Pmen_3622"/>
<dbReference type="KEGG" id="pmy:Pmen_3622"/>
<dbReference type="PATRIC" id="fig|399739.8.peg.3671"/>
<dbReference type="eggNOG" id="COG0289">
    <property type="taxonomic scope" value="Bacteria"/>
</dbReference>
<dbReference type="HOGENOM" id="CLU_047479_2_1_6"/>
<dbReference type="OrthoDB" id="9790352at2"/>
<dbReference type="UniPathway" id="UPA00034">
    <property type="reaction ID" value="UER00018"/>
</dbReference>
<dbReference type="GO" id="GO:0005829">
    <property type="term" value="C:cytosol"/>
    <property type="evidence" value="ECO:0007669"/>
    <property type="project" value="TreeGrafter"/>
</dbReference>
<dbReference type="GO" id="GO:0008839">
    <property type="term" value="F:4-hydroxy-tetrahydrodipicolinate reductase"/>
    <property type="evidence" value="ECO:0007669"/>
    <property type="project" value="UniProtKB-EC"/>
</dbReference>
<dbReference type="GO" id="GO:0051287">
    <property type="term" value="F:NAD binding"/>
    <property type="evidence" value="ECO:0007669"/>
    <property type="project" value="UniProtKB-UniRule"/>
</dbReference>
<dbReference type="GO" id="GO:0050661">
    <property type="term" value="F:NADP binding"/>
    <property type="evidence" value="ECO:0007669"/>
    <property type="project" value="UniProtKB-UniRule"/>
</dbReference>
<dbReference type="GO" id="GO:0016726">
    <property type="term" value="F:oxidoreductase activity, acting on CH or CH2 groups, NAD or NADP as acceptor"/>
    <property type="evidence" value="ECO:0007669"/>
    <property type="project" value="UniProtKB-UniRule"/>
</dbReference>
<dbReference type="GO" id="GO:0019877">
    <property type="term" value="P:diaminopimelate biosynthetic process"/>
    <property type="evidence" value="ECO:0007669"/>
    <property type="project" value="UniProtKB-UniRule"/>
</dbReference>
<dbReference type="GO" id="GO:0009089">
    <property type="term" value="P:lysine biosynthetic process via diaminopimelate"/>
    <property type="evidence" value="ECO:0007669"/>
    <property type="project" value="UniProtKB-UniRule"/>
</dbReference>
<dbReference type="CDD" id="cd02274">
    <property type="entry name" value="DHDPR_N"/>
    <property type="match status" value="1"/>
</dbReference>
<dbReference type="FunFam" id="3.30.360.10:FF:000004">
    <property type="entry name" value="4-hydroxy-tetrahydrodipicolinate reductase"/>
    <property type="match status" value="1"/>
</dbReference>
<dbReference type="FunFam" id="3.40.50.720:FF:000048">
    <property type="entry name" value="4-hydroxy-tetrahydrodipicolinate reductase"/>
    <property type="match status" value="1"/>
</dbReference>
<dbReference type="Gene3D" id="3.30.360.10">
    <property type="entry name" value="Dihydrodipicolinate Reductase, domain 2"/>
    <property type="match status" value="1"/>
</dbReference>
<dbReference type="Gene3D" id="3.40.50.720">
    <property type="entry name" value="NAD(P)-binding Rossmann-like Domain"/>
    <property type="match status" value="1"/>
</dbReference>
<dbReference type="HAMAP" id="MF_00102">
    <property type="entry name" value="DapB"/>
    <property type="match status" value="1"/>
</dbReference>
<dbReference type="InterPro" id="IPR022663">
    <property type="entry name" value="DapB_C"/>
</dbReference>
<dbReference type="InterPro" id="IPR000846">
    <property type="entry name" value="DapB_N"/>
</dbReference>
<dbReference type="InterPro" id="IPR022664">
    <property type="entry name" value="DapB_N_CS"/>
</dbReference>
<dbReference type="InterPro" id="IPR023940">
    <property type="entry name" value="DHDPR_bac"/>
</dbReference>
<dbReference type="InterPro" id="IPR036291">
    <property type="entry name" value="NAD(P)-bd_dom_sf"/>
</dbReference>
<dbReference type="NCBIfam" id="TIGR00036">
    <property type="entry name" value="dapB"/>
    <property type="match status" value="1"/>
</dbReference>
<dbReference type="PANTHER" id="PTHR20836:SF0">
    <property type="entry name" value="4-HYDROXY-TETRAHYDRODIPICOLINATE REDUCTASE 1, CHLOROPLASTIC-RELATED"/>
    <property type="match status" value="1"/>
</dbReference>
<dbReference type="PANTHER" id="PTHR20836">
    <property type="entry name" value="DIHYDRODIPICOLINATE REDUCTASE"/>
    <property type="match status" value="1"/>
</dbReference>
<dbReference type="Pfam" id="PF05173">
    <property type="entry name" value="DapB_C"/>
    <property type="match status" value="1"/>
</dbReference>
<dbReference type="Pfam" id="PF01113">
    <property type="entry name" value="DapB_N"/>
    <property type="match status" value="1"/>
</dbReference>
<dbReference type="PIRSF" id="PIRSF000161">
    <property type="entry name" value="DHPR"/>
    <property type="match status" value="1"/>
</dbReference>
<dbReference type="SUPFAM" id="SSF55347">
    <property type="entry name" value="Glyceraldehyde-3-phosphate dehydrogenase-like, C-terminal domain"/>
    <property type="match status" value="1"/>
</dbReference>
<dbReference type="SUPFAM" id="SSF51735">
    <property type="entry name" value="NAD(P)-binding Rossmann-fold domains"/>
    <property type="match status" value="1"/>
</dbReference>
<dbReference type="PROSITE" id="PS01298">
    <property type="entry name" value="DAPB"/>
    <property type="match status" value="1"/>
</dbReference>
<evidence type="ECO:0000255" key="1">
    <source>
        <dbReference type="HAMAP-Rule" id="MF_00102"/>
    </source>
</evidence>
<evidence type="ECO:0000305" key="2"/>
<comment type="function">
    <text evidence="1">Catalyzes the conversion of 4-hydroxy-tetrahydrodipicolinate (HTPA) to tetrahydrodipicolinate.</text>
</comment>
<comment type="catalytic activity">
    <reaction evidence="1">
        <text>(S)-2,3,4,5-tetrahydrodipicolinate + NAD(+) + H2O = (2S,4S)-4-hydroxy-2,3,4,5-tetrahydrodipicolinate + NADH + H(+)</text>
        <dbReference type="Rhea" id="RHEA:35323"/>
        <dbReference type="ChEBI" id="CHEBI:15377"/>
        <dbReference type="ChEBI" id="CHEBI:15378"/>
        <dbReference type="ChEBI" id="CHEBI:16845"/>
        <dbReference type="ChEBI" id="CHEBI:57540"/>
        <dbReference type="ChEBI" id="CHEBI:57945"/>
        <dbReference type="ChEBI" id="CHEBI:67139"/>
        <dbReference type="EC" id="1.17.1.8"/>
    </reaction>
</comment>
<comment type="catalytic activity">
    <reaction evidence="1">
        <text>(S)-2,3,4,5-tetrahydrodipicolinate + NADP(+) + H2O = (2S,4S)-4-hydroxy-2,3,4,5-tetrahydrodipicolinate + NADPH + H(+)</text>
        <dbReference type="Rhea" id="RHEA:35331"/>
        <dbReference type="ChEBI" id="CHEBI:15377"/>
        <dbReference type="ChEBI" id="CHEBI:15378"/>
        <dbReference type="ChEBI" id="CHEBI:16845"/>
        <dbReference type="ChEBI" id="CHEBI:57783"/>
        <dbReference type="ChEBI" id="CHEBI:58349"/>
        <dbReference type="ChEBI" id="CHEBI:67139"/>
        <dbReference type="EC" id="1.17.1.8"/>
    </reaction>
</comment>
<comment type="pathway">
    <text evidence="1">Amino-acid biosynthesis; L-lysine biosynthesis via DAP pathway; (S)-tetrahydrodipicolinate from L-aspartate: step 4/4.</text>
</comment>
<comment type="subcellular location">
    <subcellularLocation>
        <location evidence="1">Cytoplasm</location>
    </subcellularLocation>
</comment>
<comment type="similarity">
    <text evidence="1">Belongs to the DapB family.</text>
</comment>
<comment type="caution">
    <text evidence="2">Was originally thought to be a dihydrodipicolinate reductase (DHDPR), catalyzing the conversion of dihydrodipicolinate to tetrahydrodipicolinate. However, it was shown in E.coli that the substrate of the enzymatic reaction is not dihydrodipicolinate (DHDP) but in fact (2S,4S)-4-hydroxy-2,3,4,5-tetrahydrodipicolinic acid (HTPA), the product released by the DapA-catalyzed reaction.</text>
</comment>
<gene>
    <name evidence="1" type="primary">dapB</name>
    <name type="ordered locus">Pmen_3622</name>
</gene>
<protein>
    <recommendedName>
        <fullName evidence="1">4-hydroxy-tetrahydrodipicolinate reductase</fullName>
        <shortName evidence="1">HTPA reductase</shortName>
        <ecNumber evidence="1">1.17.1.8</ecNumber>
    </recommendedName>
</protein>
<name>DAPB_ECTM1</name>
<organism>
    <name type="scientific">Ectopseudomonas mendocina (strain ymp)</name>
    <name type="common">Pseudomonas mendocina</name>
    <dbReference type="NCBI Taxonomy" id="399739"/>
    <lineage>
        <taxon>Bacteria</taxon>
        <taxon>Pseudomonadati</taxon>
        <taxon>Pseudomonadota</taxon>
        <taxon>Gammaproteobacteria</taxon>
        <taxon>Pseudomonadales</taxon>
        <taxon>Pseudomonadaceae</taxon>
        <taxon>Ectopseudomonas</taxon>
    </lineage>
</organism>
<keyword id="KW-0028">Amino-acid biosynthesis</keyword>
<keyword id="KW-0963">Cytoplasm</keyword>
<keyword id="KW-0220">Diaminopimelate biosynthesis</keyword>
<keyword id="KW-0457">Lysine biosynthesis</keyword>
<keyword id="KW-0520">NAD</keyword>
<keyword id="KW-0521">NADP</keyword>
<keyword id="KW-0560">Oxidoreductase</keyword>
<sequence>MQRIAVMGAAGRMGKTLIEAVSQAEGATLSAAIDRADSSLIGADAGELVGLGKIGVTLAGDLAAMVDDFDVLIDFTHPSVTLKNLEVCRQAGKAMVIGTTGFTVEEKQQLSEAAKQIPIVFAANFSVGVNLCLKLLDTAARVLGDDVDIEIIEAHHRHKVDAPSGTALRMGEVVADALGRDLQKVAVYGREGQTGARERETIGFATVRAGDVVGDHTVLFAADGERVEITHKASSRMTFAKGAVRSALWLQQRSPALYDMQDVLGLR</sequence>
<reference key="1">
    <citation type="submission" date="2007-04" db="EMBL/GenBank/DDBJ databases">
        <title>Complete sequence of Pseudomonas mendocina ymp.</title>
        <authorList>
            <consortium name="US DOE Joint Genome Institute"/>
            <person name="Copeland A."/>
            <person name="Lucas S."/>
            <person name="Lapidus A."/>
            <person name="Barry K."/>
            <person name="Glavina del Rio T."/>
            <person name="Dalin E."/>
            <person name="Tice H."/>
            <person name="Pitluck S."/>
            <person name="Kiss H."/>
            <person name="Brettin T."/>
            <person name="Detter J.C."/>
            <person name="Bruce D."/>
            <person name="Han C."/>
            <person name="Schmutz J."/>
            <person name="Larimer F."/>
            <person name="Land M."/>
            <person name="Hauser L."/>
            <person name="Kyrpides N."/>
            <person name="Mikhailova N."/>
            <person name="Hersman L."/>
            <person name="Dubois J."/>
            <person name="Maurice P."/>
            <person name="Richardson P."/>
        </authorList>
    </citation>
    <scope>NUCLEOTIDE SEQUENCE [LARGE SCALE GENOMIC DNA]</scope>
    <source>
        <strain>ymp</strain>
    </source>
</reference>
<accession>A4XYF4</accession>
<proteinExistence type="inferred from homology"/>